<sequence>QRPEYPVWREKGAV</sequence>
<proteinExistence type="evidence at protein level"/>
<accession>P20728</accession>
<protein>
    <recommendedName>
        <fullName>Calotropin-DI</fullName>
        <ecNumber>3.4.22.-</ecNumber>
    </recommendedName>
</protein>
<feature type="chain" id="PRO_0000050548" description="Calotropin-DI">
    <location>
        <begin position="1"/>
        <end position="14" status="greater than"/>
    </location>
</feature>
<feature type="modified residue" description="Pyrrolidone carboxylic acid" evidence="4">
    <location>
        <position position="1"/>
    </location>
</feature>
<feature type="non-terminal residue">
    <location>
        <position position="14"/>
    </location>
</feature>
<evidence type="ECO:0000255" key="1">
    <source>
        <dbReference type="PROSITE-ProRule" id="PRU10088"/>
    </source>
</evidence>
<evidence type="ECO:0000255" key="2">
    <source>
        <dbReference type="PROSITE-ProRule" id="PRU10089"/>
    </source>
</evidence>
<evidence type="ECO:0000255" key="3">
    <source>
        <dbReference type="PROSITE-ProRule" id="PRU10090"/>
    </source>
</evidence>
<evidence type="ECO:0000269" key="4">
    <source ref="1"/>
</evidence>
<organism>
    <name type="scientific">Calotropis gigantea</name>
    <name type="common">Giant milkweed</name>
    <name type="synonym">Asclepias gigantea</name>
    <dbReference type="NCBI Taxonomy" id="4066"/>
    <lineage>
        <taxon>Eukaryota</taxon>
        <taxon>Viridiplantae</taxon>
        <taxon>Streptophyta</taxon>
        <taxon>Embryophyta</taxon>
        <taxon>Tracheophyta</taxon>
        <taxon>Spermatophyta</taxon>
        <taxon>Magnoliopsida</taxon>
        <taxon>eudicotyledons</taxon>
        <taxon>Gunneridae</taxon>
        <taxon>Pentapetalae</taxon>
        <taxon>asterids</taxon>
        <taxon>lamiids</taxon>
        <taxon>Gentianales</taxon>
        <taxon>Apocynaceae</taxon>
        <taxon>Asclepiadoideae</taxon>
        <taxon>Asclepiadeae</taxon>
        <taxon>Asclepiadinae</taxon>
        <taxon>Calotropis</taxon>
    </lineage>
</organism>
<dbReference type="EC" id="3.4.22.-"/>
<dbReference type="PIR" id="PT0026">
    <property type="entry name" value="PT0026"/>
</dbReference>
<dbReference type="MEROPS" id="C01.011"/>
<dbReference type="GO" id="GO:0008234">
    <property type="term" value="F:cysteine-type peptidase activity"/>
    <property type="evidence" value="ECO:0007669"/>
    <property type="project" value="UniProtKB-KW"/>
</dbReference>
<dbReference type="GO" id="GO:0006508">
    <property type="term" value="P:proteolysis"/>
    <property type="evidence" value="ECO:0007669"/>
    <property type="project" value="UniProtKB-KW"/>
</dbReference>
<reference key="1">
    <citation type="journal article" date="1987" name="Phytochemistry">
        <title>Chemical modification and amino terminal sequence of calotropin DI from Calotropis gigantea.</title>
        <authorList>
            <person name="Bhattacharya D."/>
            <person name="Sengupta A."/>
            <person name="Sinha N.K."/>
        </authorList>
    </citation>
    <scope>PROTEIN SEQUENCE</scope>
    <scope>PYROGLUTAMATE FORMATION AT GLN-1</scope>
</reference>
<keyword id="KW-0903">Direct protein sequencing</keyword>
<keyword id="KW-0378">Hydrolase</keyword>
<keyword id="KW-0645">Protease</keyword>
<keyword id="KW-0873">Pyrrolidone carboxylic acid</keyword>
<keyword id="KW-0788">Thiol protease</keyword>
<comment type="similarity">
    <text evidence="1 2 3">Belongs to the peptidase C1 family.</text>
</comment>
<name>CAL1_CALGI</name>